<keyword id="KW-0025">Alternative splicing</keyword>
<keyword id="KW-0072">Autophagy</keyword>
<keyword id="KW-0221">Differentiation</keyword>
<keyword id="KW-0449">Lipoprotein</keyword>
<keyword id="KW-0564">Palmitate</keyword>
<keyword id="KW-1267">Proteomics identification</keyword>
<keyword id="KW-1185">Reference proteome</keyword>
<keyword id="KW-0677">Repeat</keyword>
<keyword id="KW-0744">Spermatogenesis</keyword>
<feature type="chain" id="PRO_0000284403" description="Armadillo repeat-containing protein 3">
    <location>
        <begin position="1"/>
        <end position="872"/>
    </location>
</feature>
<feature type="repeat" description="ARM 1">
    <location>
        <begin position="15"/>
        <end position="54"/>
    </location>
</feature>
<feature type="repeat" description="ARM 2">
    <location>
        <begin position="57"/>
        <end position="96"/>
    </location>
</feature>
<feature type="repeat" description="ARM 3">
    <location>
        <begin position="98"/>
        <end position="138"/>
    </location>
</feature>
<feature type="repeat" description="ARM 4">
    <location>
        <begin position="140"/>
        <end position="179"/>
    </location>
</feature>
<feature type="repeat" description="ARM 5">
    <location>
        <begin position="181"/>
        <end position="220"/>
    </location>
</feature>
<feature type="repeat" description="ARM 6">
    <location>
        <begin position="222"/>
        <end position="262"/>
    </location>
</feature>
<feature type="repeat" description="ARM 7">
    <location>
        <begin position="264"/>
        <end position="304"/>
    </location>
</feature>
<feature type="repeat" description="ARM 8">
    <location>
        <begin position="306"/>
        <end position="345"/>
    </location>
</feature>
<feature type="repeat" description="ARM 9">
    <location>
        <begin position="346"/>
        <end position="385"/>
    </location>
</feature>
<feature type="repeat" description="ARM 10">
    <location>
        <begin position="388"/>
        <end position="427"/>
    </location>
</feature>
<feature type="repeat" description="ARM 11">
    <location>
        <begin position="429"/>
        <end position="468"/>
    </location>
</feature>
<feature type="repeat" description="ARM 12">
    <location>
        <begin position="470"/>
        <end position="509"/>
    </location>
</feature>
<feature type="region of interest" description="Disordered" evidence="2">
    <location>
        <begin position="610"/>
        <end position="693"/>
    </location>
</feature>
<feature type="compositionally biased region" description="Low complexity" evidence="2">
    <location>
        <begin position="626"/>
        <end position="635"/>
    </location>
</feature>
<feature type="compositionally biased region" description="Basic residues" evidence="2">
    <location>
        <begin position="636"/>
        <end position="646"/>
    </location>
</feature>
<feature type="compositionally biased region" description="Basic and acidic residues" evidence="2">
    <location>
        <begin position="675"/>
        <end position="693"/>
    </location>
</feature>
<feature type="lipid moiety-binding region" description="S-palmitoyl cysteine" evidence="1">
    <location>
        <position position="507"/>
    </location>
</feature>
<feature type="lipid moiety-binding region" description="S-palmitoyl cysteine" evidence="1">
    <location>
        <position position="518"/>
    </location>
</feature>
<feature type="splice variant" id="VSP_028551" description="In isoform 5." evidence="8">
    <original>NAAAEA</original>
    <variation>KEMEHE</variation>
    <location>
        <begin position="392"/>
        <end position="397"/>
    </location>
</feature>
<feature type="splice variant" id="VSP_028552" description="In isoform 5." evidence="8">
    <location>
        <begin position="398"/>
        <end position="872"/>
    </location>
</feature>
<feature type="splice variant" id="VSP_024498" description="In isoform 4." evidence="7">
    <original>KKNSYHFS</original>
    <variation>N</variation>
    <location>
        <begin position="643"/>
        <end position="650"/>
    </location>
</feature>
<feature type="splice variant" id="VSP_024500" description="In isoform 3." evidence="9">
    <original>RKSKGKK</original>
    <variation>SSLPTSR</variation>
    <location>
        <begin position="682"/>
        <end position="688"/>
    </location>
</feature>
<feature type="splice variant" id="VSP_024501" description="In isoform 3." evidence="9">
    <location>
        <begin position="689"/>
        <end position="872"/>
    </location>
</feature>
<feature type="sequence variant" id="VAR_050669" description="In dbSNP:rs16922864.">
    <original>E</original>
    <variation>G</variation>
    <location>
        <position position="345"/>
    </location>
</feature>
<feature type="sequence variant" id="VAR_088606" description="Found in an infertile male patient; uncertain significance; exerts an inhibitory effect on the autophagic function of wild-type ARMC3." evidence="6">
    <original>P</original>
    <variation>A</variation>
    <location>
        <position position="484"/>
    </location>
</feature>
<feature type="sequence variant" id="VAR_050670" description="In dbSNP:rs11013233.">
    <original>S</original>
    <variation>P</variation>
    <location>
        <position position="608"/>
    </location>
</feature>
<feature type="sequence variant" id="VAR_050671" description="In dbSNP:rs10828395." evidence="3">
    <original>R</original>
    <variation>Q</variation>
    <location>
        <position position="626"/>
    </location>
</feature>
<feature type="sequence conflict" description="In Ref. 2; BAB71463." evidence="10" ref="2">
    <original>P</original>
    <variation>S</variation>
    <location>
        <position position="586"/>
    </location>
</feature>
<dbReference type="EMBL" id="AY436643">
    <property type="protein sequence ID" value="AAR99738.1"/>
    <property type="molecule type" value="mRNA"/>
</dbReference>
<dbReference type="EMBL" id="AK057389">
    <property type="protein sequence ID" value="BAB71463.1"/>
    <property type="molecule type" value="mRNA"/>
</dbReference>
<dbReference type="EMBL" id="AK098711">
    <property type="protein sequence ID" value="BAC05389.1"/>
    <property type="status" value="ALT_INIT"/>
    <property type="molecule type" value="mRNA"/>
</dbReference>
<dbReference type="EMBL" id="AL139815">
    <property type="protein sequence ID" value="CAX14862.1"/>
    <property type="molecule type" value="Genomic_DNA"/>
</dbReference>
<dbReference type="EMBL" id="AC079269">
    <property type="protein sequence ID" value="CAX14862.1"/>
    <property type="status" value="JOINED"/>
    <property type="molecule type" value="Genomic_DNA"/>
</dbReference>
<dbReference type="EMBL" id="AL139815">
    <property type="protein sequence ID" value="CAX14863.1"/>
    <property type="molecule type" value="Genomic_DNA"/>
</dbReference>
<dbReference type="EMBL" id="AC079269">
    <property type="protein sequence ID" value="CAX14863.1"/>
    <property type="status" value="JOINED"/>
    <property type="molecule type" value="Genomic_DNA"/>
</dbReference>
<dbReference type="EMBL" id="AK302985">
    <property type="protein sequence ID" value="BAG64125.1"/>
    <property type="molecule type" value="mRNA"/>
</dbReference>
<dbReference type="EMBL" id="AL139815">
    <property type="protein sequence ID" value="CAH72189.2"/>
    <property type="molecule type" value="Genomic_DNA"/>
</dbReference>
<dbReference type="EMBL" id="AC079269">
    <property type="protein sequence ID" value="CAH72189.2"/>
    <property type="status" value="JOINED"/>
    <property type="molecule type" value="Genomic_DNA"/>
</dbReference>
<dbReference type="EMBL" id="BC039312">
    <property type="protein sequence ID" value="AAH39312.1"/>
    <property type="molecule type" value="mRNA"/>
</dbReference>
<dbReference type="CCDS" id="CCDS60499.1">
    <molecule id="Q5W041-3"/>
</dbReference>
<dbReference type="CCDS" id="CCDS60500.1">
    <molecule id="Q5W041-4"/>
</dbReference>
<dbReference type="CCDS" id="CCDS7142.1">
    <molecule id="Q5W041-2"/>
</dbReference>
<dbReference type="RefSeq" id="NP_001269674.1">
    <molecule id="Q5W041-4"/>
    <property type="nucleotide sequence ID" value="NM_001282745.2"/>
</dbReference>
<dbReference type="RefSeq" id="NP_001269675.1">
    <molecule id="Q5W041-3"/>
    <property type="nucleotide sequence ID" value="NM_001282746.2"/>
</dbReference>
<dbReference type="RefSeq" id="NP_001269676.1">
    <property type="nucleotide sequence ID" value="NM_001282747.1"/>
</dbReference>
<dbReference type="RefSeq" id="NP_775104.2">
    <molecule id="Q5W041-2"/>
    <property type="nucleotide sequence ID" value="NM_173081.5"/>
</dbReference>
<dbReference type="SMR" id="Q5W041"/>
<dbReference type="BioGRID" id="128563">
    <property type="interactions" value="5"/>
</dbReference>
<dbReference type="FunCoup" id="Q5W041">
    <property type="interactions" value="89"/>
</dbReference>
<dbReference type="IntAct" id="Q5W041">
    <property type="interactions" value="3"/>
</dbReference>
<dbReference type="STRING" id="9606.ENSP00000298032"/>
<dbReference type="iPTMnet" id="Q5W041"/>
<dbReference type="PhosphoSitePlus" id="Q5W041"/>
<dbReference type="BioMuta" id="ARMC3"/>
<dbReference type="DMDM" id="215273946"/>
<dbReference type="jPOST" id="Q5W041"/>
<dbReference type="MassIVE" id="Q5W041"/>
<dbReference type="PaxDb" id="9606-ENSP00000298032"/>
<dbReference type="PeptideAtlas" id="Q5W041"/>
<dbReference type="ProteomicsDB" id="65747">
    <molecule id="Q5W041-2"/>
</dbReference>
<dbReference type="ProteomicsDB" id="65748">
    <molecule id="Q5W041-3"/>
</dbReference>
<dbReference type="ProteomicsDB" id="65749">
    <molecule id="Q5W041-4"/>
</dbReference>
<dbReference type="ProteomicsDB" id="65750">
    <molecule id="Q5W041-5"/>
</dbReference>
<dbReference type="Antibodypedia" id="44327">
    <property type="antibodies" value="84 antibodies from 17 providers"/>
</dbReference>
<dbReference type="DNASU" id="219681"/>
<dbReference type="Ensembl" id="ENST00000298032.10">
    <molecule id="Q5W041-2"/>
    <property type="protein sequence ID" value="ENSP00000298032.5"/>
    <property type="gene ID" value="ENSG00000165309.14"/>
</dbReference>
<dbReference type="Ensembl" id="ENST00000409049.7">
    <molecule id="Q5W041-3"/>
    <property type="protein sequence ID" value="ENSP00000387288.3"/>
    <property type="gene ID" value="ENSG00000165309.14"/>
</dbReference>
<dbReference type="Ensembl" id="ENST00000409983.7">
    <molecule id="Q5W041-4"/>
    <property type="protein sequence ID" value="ENSP00000386943.3"/>
    <property type="gene ID" value="ENSG00000165309.14"/>
</dbReference>
<dbReference type="GeneID" id="219681"/>
<dbReference type="KEGG" id="hsa:219681"/>
<dbReference type="MANE-Select" id="ENST00000298032.10">
    <property type="protein sequence ID" value="ENSP00000298032.5"/>
    <property type="RefSeq nucleotide sequence ID" value="NM_173081.5"/>
    <property type="RefSeq protein sequence ID" value="NP_775104.2"/>
</dbReference>
<dbReference type="UCSC" id="uc001irm.6">
    <molecule id="Q5W041-2"/>
    <property type="organism name" value="human"/>
</dbReference>
<dbReference type="AGR" id="HGNC:30964"/>
<dbReference type="CTD" id="219681"/>
<dbReference type="DisGeNET" id="219681"/>
<dbReference type="GeneCards" id="ARMC3"/>
<dbReference type="HGNC" id="HGNC:30964">
    <property type="gene designation" value="ARMC3"/>
</dbReference>
<dbReference type="HPA" id="ENSG00000165309">
    <property type="expression patterns" value="Group enriched (choroid plexus, fallopian tube, testis)"/>
</dbReference>
<dbReference type="MIM" id="611226">
    <property type="type" value="gene"/>
</dbReference>
<dbReference type="neXtProt" id="NX_Q5W041"/>
<dbReference type="OpenTargets" id="ENSG00000165309"/>
<dbReference type="PharmGKB" id="PA134917281"/>
<dbReference type="VEuPathDB" id="HostDB:ENSG00000165309"/>
<dbReference type="eggNOG" id="KOG0167">
    <property type="taxonomic scope" value="Eukaryota"/>
</dbReference>
<dbReference type="GeneTree" id="ENSGT00940000157476"/>
<dbReference type="HOGENOM" id="CLU_018048_0_0_1"/>
<dbReference type="InParanoid" id="Q5W041"/>
<dbReference type="OMA" id="LYPMQSR"/>
<dbReference type="OrthoDB" id="7537227at2759"/>
<dbReference type="PAN-GO" id="Q5W041">
    <property type="GO annotations" value="0 GO annotations based on evolutionary models"/>
</dbReference>
<dbReference type="PhylomeDB" id="Q5W041"/>
<dbReference type="TreeFam" id="TF329738"/>
<dbReference type="PathwayCommons" id="Q5W041"/>
<dbReference type="SignaLink" id="Q5W041"/>
<dbReference type="BioGRID-ORCS" id="219681">
    <property type="hits" value="10 hits in 1133 CRISPR screens"/>
</dbReference>
<dbReference type="ChiTaRS" id="ARMC3">
    <property type="organism name" value="human"/>
</dbReference>
<dbReference type="GenomeRNAi" id="219681"/>
<dbReference type="Pharos" id="Q5W041">
    <property type="development level" value="Tbio"/>
</dbReference>
<dbReference type="PRO" id="PR:Q5W041"/>
<dbReference type="Proteomes" id="UP000005640">
    <property type="component" value="Chromosome 10"/>
</dbReference>
<dbReference type="RNAct" id="Q5W041">
    <property type="molecule type" value="protein"/>
</dbReference>
<dbReference type="Bgee" id="ENSG00000165309">
    <property type="expression patterns" value="Expressed in right uterine tube and 109 other cell types or tissues"/>
</dbReference>
<dbReference type="ExpressionAtlas" id="Q5W041">
    <property type="expression patterns" value="baseline and differential"/>
</dbReference>
<dbReference type="GO" id="GO:0070062">
    <property type="term" value="C:extracellular exosome"/>
    <property type="evidence" value="ECO:0007005"/>
    <property type="project" value="UniProtKB"/>
</dbReference>
<dbReference type="GO" id="GO:0030317">
    <property type="term" value="P:flagellated sperm motility"/>
    <property type="evidence" value="ECO:0000250"/>
    <property type="project" value="UniProtKB"/>
</dbReference>
<dbReference type="GO" id="GO:0034517">
    <property type="term" value="P:ribophagy"/>
    <property type="evidence" value="ECO:0000250"/>
    <property type="project" value="UniProtKB"/>
</dbReference>
<dbReference type="GO" id="GO:0007286">
    <property type="term" value="P:spermatid development"/>
    <property type="evidence" value="ECO:0000250"/>
    <property type="project" value="UniProtKB"/>
</dbReference>
<dbReference type="FunFam" id="1.25.10.10:FF:000797">
    <property type="entry name" value="Armadillo repeat-containing protein 3"/>
    <property type="match status" value="1"/>
</dbReference>
<dbReference type="FunFam" id="1.25.10.10:FF:001232">
    <property type="entry name" value="armadillo repeat-containing protein 3"/>
    <property type="match status" value="1"/>
</dbReference>
<dbReference type="Gene3D" id="1.25.10.10">
    <property type="entry name" value="Leucine-rich Repeat Variant"/>
    <property type="match status" value="3"/>
</dbReference>
<dbReference type="InterPro" id="IPR011989">
    <property type="entry name" value="ARM-like"/>
</dbReference>
<dbReference type="InterPro" id="IPR016024">
    <property type="entry name" value="ARM-type_fold"/>
</dbReference>
<dbReference type="InterPro" id="IPR055445">
    <property type="entry name" value="ARM_ARMC5"/>
</dbReference>
<dbReference type="InterPro" id="IPR000225">
    <property type="entry name" value="Armadillo"/>
</dbReference>
<dbReference type="InterPro" id="IPR052441">
    <property type="entry name" value="Armadillo-Ser/Thr_Kinase"/>
</dbReference>
<dbReference type="InterPro" id="IPR055164">
    <property type="entry name" value="EDR1/CTR1/ARMC3-like_pept-like"/>
</dbReference>
<dbReference type="PANTHER" id="PTHR46618">
    <property type="entry name" value="ARMADILLO REPEAT-CONTAINING PROTEIN 3"/>
    <property type="match status" value="1"/>
</dbReference>
<dbReference type="PANTHER" id="PTHR46618:SF1">
    <property type="entry name" value="ARMADILLO REPEAT-CONTAINING PROTEIN 3"/>
    <property type="match status" value="1"/>
</dbReference>
<dbReference type="Pfam" id="PF00514">
    <property type="entry name" value="Arm"/>
    <property type="match status" value="1"/>
</dbReference>
<dbReference type="Pfam" id="PF24768">
    <property type="entry name" value="ARM_ARMC5"/>
    <property type="match status" value="1"/>
</dbReference>
<dbReference type="Pfam" id="PF14381">
    <property type="entry name" value="EDR1_CTR1_ARMC3_pept"/>
    <property type="match status" value="1"/>
</dbReference>
<dbReference type="SMART" id="SM00185">
    <property type="entry name" value="ARM"/>
    <property type="match status" value="10"/>
</dbReference>
<dbReference type="SUPFAM" id="SSF48371">
    <property type="entry name" value="ARM repeat"/>
    <property type="match status" value="2"/>
</dbReference>
<dbReference type="PROSITE" id="PS50176">
    <property type="entry name" value="ARM_REPEAT"/>
    <property type="match status" value="4"/>
</dbReference>
<sequence length="872" mass="96405">MGKKIKKEVEPPPKDVFDPLMIESKKAATVVLMLNSPEEEILAKACEAIYKFALKGEENKTTLLELGAVEPLTKLLTHEDKIVRRNATMIFGILASNNDVKKLLRELDVMNSVIAQLAPEEEVVIHEFASLCLANMSAEYTSKVQIFEHGGLEPLIRLLSSPDPDVKKNSMECIYNLVQDFQCRAKLQELNAIPPILDLLKSEYPVIQLLALKTLGVIANDKESRTMLRDNQGLDHLIKILETKELNDLHIEALAVIANCLEDMDTMVQIQQTGGLKKLLSFAENSTIPDIQKNAAKAITKAAYDPENRKLFHEQEVEKCLVALLGSENDGTKIAASQAISAMCENSGSKDFFNNQGIPQLIQLLKSDNEEVREAAALALANLTTCNPANANAAAEADGIDPLINLLSSKRDGAIANAATVLTNMAMQEPLRLNIQNHDIMHAIISPLRSANTVVQSKAALAVTATACDVEARTELRNSGGLEPLVELLRSKNDEVRKHASWAVMVCAGDELTANELCRLGALDILEEVNVSGTRKNKFSEAAYNKLLNNNLSLKYSQTGYLSSSNIINDGFYDYGRINPGTKLLPLKELCLQEPSDLRAVLLINSKSYVSPPSSMEDKSDVGYGRSISSSSSLRRSSKEKNKKNSYHFSAGFGSPIEDKSEPASGRNTVLSKSATKEKGWRKSKGKKEEEKVKEEEEVMVVPKFVGEGSSDKEWCPPSDPDFSMYVYEVTKSILPITNIKEQIEDLAKYVAEKMGGKIPKEKLPDFSWELHISELKFQLKSNVIPIGHVKKGIFYHRALLFKALADRIGIGCSLVRGEYGRAWNEVMLQNDSRKGVIGGLPAPEMYVIDLMFHPGGLMKLRSREADLYRFI</sequence>
<evidence type="ECO:0000250" key="1">
    <source>
        <dbReference type="UniProtKB" id="A2AU72"/>
    </source>
</evidence>
<evidence type="ECO:0000256" key="2">
    <source>
        <dbReference type="SAM" id="MobiDB-lite"/>
    </source>
</evidence>
<evidence type="ECO:0000269" key="3">
    <source>
    </source>
</evidence>
<evidence type="ECO:0000269" key="4">
    <source>
    </source>
</evidence>
<evidence type="ECO:0000269" key="5">
    <source>
    </source>
</evidence>
<evidence type="ECO:0000269" key="6">
    <source>
    </source>
</evidence>
<evidence type="ECO:0000303" key="7">
    <source>
    </source>
</evidence>
<evidence type="ECO:0000303" key="8">
    <source>
    </source>
</evidence>
<evidence type="ECO:0000303" key="9">
    <source>
    </source>
</evidence>
<evidence type="ECO:0000305" key="10"/>
<gene>
    <name type="primary">ARMC3</name>
</gene>
<protein>
    <recommendedName>
        <fullName>Armadillo repeat-containing protein 3</fullName>
    </recommendedName>
    <alternativeName>
        <fullName>Beta-catenin-like protein</fullName>
    </alternativeName>
    <alternativeName>
        <fullName>Cancer/testis antigen 81</fullName>
        <shortName>CT81</shortName>
    </alternativeName>
    <alternativeName>
        <fullName>KU-CT-1</fullName>
    </alternativeName>
</protein>
<proteinExistence type="evidence at protein level"/>
<name>ARMC3_HUMAN</name>
<organism>
    <name type="scientific">Homo sapiens</name>
    <name type="common">Human</name>
    <dbReference type="NCBI Taxonomy" id="9606"/>
    <lineage>
        <taxon>Eukaryota</taxon>
        <taxon>Metazoa</taxon>
        <taxon>Chordata</taxon>
        <taxon>Craniata</taxon>
        <taxon>Vertebrata</taxon>
        <taxon>Euteleostomi</taxon>
        <taxon>Mammalia</taxon>
        <taxon>Eutheria</taxon>
        <taxon>Euarchontoglires</taxon>
        <taxon>Primates</taxon>
        <taxon>Haplorrhini</taxon>
        <taxon>Catarrhini</taxon>
        <taxon>Hominidae</taxon>
        <taxon>Homo</taxon>
    </lineage>
</organism>
<comment type="function">
    <text evidence="1 6">Essential for male fertility and sperm motility (By similarity). During spermatogenesis, promotes the autophagic degradation of excessive ribosomes, providing energy resources for mitochondria and thus ensuring sperm flagellar motility (PubMed:34428398).</text>
</comment>
<comment type="subunit">
    <text evidence="1 6">Homodimer (PubMed:34428398). Interacts with PIK3C3, PIK3R4 and BECN1. Interacts (via ARM domains) with ATG14 (By similarity).</text>
</comment>
<comment type="alternative products">
    <event type="alternative splicing"/>
    <isoform>
        <id>Q5W041-2</id>
        <name>1</name>
        <name>ARMC3_Nu1</name>
        <name>KU-CT-1L</name>
        <sequence type="displayed"/>
    </isoform>
    <isoform>
        <id>Q5W041-3</id>
        <name>3</name>
        <name>ARMC3_Nu2</name>
        <sequence type="described" ref="VSP_024500 VSP_024501"/>
    </isoform>
    <isoform>
        <id>Q5W041-4</id>
        <name>4</name>
        <sequence type="described" ref="VSP_024498"/>
    </isoform>
    <isoform>
        <id>Q5W041-5</id>
        <name>5</name>
        <name>KU-CT-1</name>
        <sequence type="described" ref="VSP_028551 VSP_028552"/>
    </isoform>
</comment>
<comment type="tissue specificity">
    <molecule>Isoform 1</molecule>
    <text evidence="5">Expressed in skeletal muscle, brain, lung, kidney, prostate and testis.</text>
</comment>
<comment type="tissue specificity">
    <molecule>Isoform 3</molecule>
    <text evidence="5">Mainly expressed in skeletal muscle, liver, spleen and thymus.</text>
</comment>
<comment type="tissue specificity">
    <molecule>Isoform 5</molecule>
    <text evidence="4">Expressed only in the testis among normal tissues but is expressed frequently in various cancer tissues and, particularly, in pancreatic, lung and endometrial cancers.</text>
</comment>
<comment type="PTM">
    <text evidence="1">Palmitoylation is important for its function in autophagy.</text>
</comment>
<comment type="sequence caution" evidence="10">
    <conflict type="erroneous initiation">
        <sequence resource="EMBL-CDS" id="BAC05389"/>
    </conflict>
    <text>Truncated N-terminus.</text>
</comment>
<accession>Q5W041</accession>
<accession>A0PG76</accession>
<accession>A6NH64</accession>
<accession>B4DZL3</accession>
<accession>B7ZBN6</accession>
<accession>B7ZBN7</accession>
<accession>Q8IXS5</accession>
<accession>Q8N7B0</accession>
<accession>Q96M49</accession>
<reference key="1">
    <citation type="journal article" date="2006" name="Genetika">
        <title>Cloning and expression of ARMC3_v2, a novel splicing variant of the human ARMC3 gene.</title>
        <authorList>
            <person name="Li X."/>
            <person name="Liu B."/>
            <person name="Ji C.N."/>
            <person name="Kang Y."/>
            <person name="Mao Y."/>
        </authorList>
    </citation>
    <scope>NUCLEOTIDE SEQUENCE [MRNA] (ISOFORM 3)</scope>
    <scope>TISSUE SPECIFICITY</scope>
    <source>
        <tissue>Fetal brain</tissue>
    </source>
</reference>
<reference key="2">
    <citation type="journal article" date="2004" name="Nat. Genet.">
        <title>Complete sequencing and characterization of 21,243 full-length human cDNAs.</title>
        <authorList>
            <person name="Ota T."/>
            <person name="Suzuki Y."/>
            <person name="Nishikawa T."/>
            <person name="Otsuki T."/>
            <person name="Sugiyama T."/>
            <person name="Irie R."/>
            <person name="Wakamatsu A."/>
            <person name="Hayashi K."/>
            <person name="Sato H."/>
            <person name="Nagai K."/>
            <person name="Kimura K."/>
            <person name="Makita H."/>
            <person name="Sekine M."/>
            <person name="Obayashi M."/>
            <person name="Nishi T."/>
            <person name="Shibahara T."/>
            <person name="Tanaka T."/>
            <person name="Ishii S."/>
            <person name="Yamamoto J."/>
            <person name="Saito K."/>
            <person name="Kawai Y."/>
            <person name="Isono Y."/>
            <person name="Nakamura Y."/>
            <person name="Nagahari K."/>
            <person name="Murakami K."/>
            <person name="Yasuda T."/>
            <person name="Iwayanagi T."/>
            <person name="Wagatsuma M."/>
            <person name="Shiratori A."/>
            <person name="Sudo H."/>
            <person name="Hosoiri T."/>
            <person name="Kaku Y."/>
            <person name="Kodaira H."/>
            <person name="Kondo H."/>
            <person name="Sugawara M."/>
            <person name="Takahashi M."/>
            <person name="Kanda K."/>
            <person name="Yokoi T."/>
            <person name="Furuya T."/>
            <person name="Kikkawa E."/>
            <person name="Omura Y."/>
            <person name="Abe K."/>
            <person name="Kamihara K."/>
            <person name="Katsuta N."/>
            <person name="Sato K."/>
            <person name="Tanikawa M."/>
            <person name="Yamazaki M."/>
            <person name="Ninomiya K."/>
            <person name="Ishibashi T."/>
            <person name="Yamashita H."/>
            <person name="Murakawa K."/>
            <person name="Fujimori K."/>
            <person name="Tanai H."/>
            <person name="Kimata M."/>
            <person name="Watanabe M."/>
            <person name="Hiraoka S."/>
            <person name="Chiba Y."/>
            <person name="Ishida S."/>
            <person name="Ono Y."/>
            <person name="Takiguchi S."/>
            <person name="Watanabe S."/>
            <person name="Yosida M."/>
            <person name="Hotuta T."/>
            <person name="Kusano J."/>
            <person name="Kanehori K."/>
            <person name="Takahashi-Fujii A."/>
            <person name="Hara H."/>
            <person name="Tanase T.-O."/>
            <person name="Nomura Y."/>
            <person name="Togiya S."/>
            <person name="Komai F."/>
            <person name="Hara R."/>
            <person name="Takeuchi K."/>
            <person name="Arita M."/>
            <person name="Imose N."/>
            <person name="Musashino K."/>
            <person name="Yuuki H."/>
            <person name="Oshima A."/>
            <person name="Sasaki N."/>
            <person name="Aotsuka S."/>
            <person name="Yoshikawa Y."/>
            <person name="Matsunawa H."/>
            <person name="Ichihara T."/>
            <person name="Shiohata N."/>
            <person name="Sano S."/>
            <person name="Moriya S."/>
            <person name="Momiyama H."/>
            <person name="Satoh N."/>
            <person name="Takami S."/>
            <person name="Terashima Y."/>
            <person name="Suzuki O."/>
            <person name="Nakagawa S."/>
            <person name="Senoh A."/>
            <person name="Mizoguchi H."/>
            <person name="Goto Y."/>
            <person name="Shimizu F."/>
            <person name="Wakebe H."/>
            <person name="Hishigaki H."/>
            <person name="Watanabe T."/>
            <person name="Sugiyama A."/>
            <person name="Takemoto M."/>
            <person name="Kawakami B."/>
            <person name="Yamazaki M."/>
            <person name="Watanabe K."/>
            <person name="Kumagai A."/>
            <person name="Itakura S."/>
            <person name="Fukuzumi Y."/>
            <person name="Fujimori Y."/>
            <person name="Komiyama M."/>
            <person name="Tashiro H."/>
            <person name="Tanigami A."/>
            <person name="Fujiwara T."/>
            <person name="Ono T."/>
            <person name="Yamada K."/>
            <person name="Fujii Y."/>
            <person name="Ozaki K."/>
            <person name="Hirao M."/>
            <person name="Ohmori Y."/>
            <person name="Kawabata A."/>
            <person name="Hikiji T."/>
            <person name="Kobatake N."/>
            <person name="Inagaki H."/>
            <person name="Ikema Y."/>
            <person name="Okamoto S."/>
            <person name="Okitani R."/>
            <person name="Kawakami T."/>
            <person name="Noguchi S."/>
            <person name="Itoh T."/>
            <person name="Shigeta K."/>
            <person name="Senba T."/>
            <person name="Matsumura K."/>
            <person name="Nakajima Y."/>
            <person name="Mizuno T."/>
            <person name="Morinaga M."/>
            <person name="Sasaki M."/>
            <person name="Togashi T."/>
            <person name="Oyama M."/>
            <person name="Hata H."/>
            <person name="Watanabe M."/>
            <person name="Komatsu T."/>
            <person name="Mizushima-Sugano J."/>
            <person name="Satoh T."/>
            <person name="Shirai Y."/>
            <person name="Takahashi Y."/>
            <person name="Nakagawa K."/>
            <person name="Okumura K."/>
            <person name="Nagase T."/>
            <person name="Nomura N."/>
            <person name="Kikuchi H."/>
            <person name="Masuho Y."/>
            <person name="Yamashita R."/>
            <person name="Nakai K."/>
            <person name="Yada T."/>
            <person name="Nakamura Y."/>
            <person name="Ohara O."/>
            <person name="Isogai T."/>
            <person name="Sugano S."/>
        </authorList>
    </citation>
    <scope>NUCLEOTIDE SEQUENCE [LARGE SCALE MRNA] (ISOFORM 4)</scope>
    <scope>NUCLEOTIDE SEQUENCE [LARGE SCALE MRNA] OF 459-875 (ISOFORM 1)</scope>
    <source>
        <tissue>Testis</tissue>
    </source>
</reference>
<reference key="3">
    <citation type="journal article" date="2004" name="Nature">
        <title>The DNA sequence and comparative analysis of human chromosome 10.</title>
        <authorList>
            <person name="Deloukas P."/>
            <person name="Earthrowl M.E."/>
            <person name="Grafham D.V."/>
            <person name="Rubenfield M."/>
            <person name="French L."/>
            <person name="Steward C.A."/>
            <person name="Sims S.K."/>
            <person name="Jones M.C."/>
            <person name="Searle S."/>
            <person name="Scott C."/>
            <person name="Howe K."/>
            <person name="Hunt S.E."/>
            <person name="Andrews T.D."/>
            <person name="Gilbert J.G.R."/>
            <person name="Swarbreck D."/>
            <person name="Ashurst J.L."/>
            <person name="Taylor A."/>
            <person name="Battles J."/>
            <person name="Bird C.P."/>
            <person name="Ainscough R."/>
            <person name="Almeida J.P."/>
            <person name="Ashwell R.I.S."/>
            <person name="Ambrose K.D."/>
            <person name="Babbage A.K."/>
            <person name="Bagguley C.L."/>
            <person name="Bailey J."/>
            <person name="Banerjee R."/>
            <person name="Bates K."/>
            <person name="Beasley H."/>
            <person name="Bray-Allen S."/>
            <person name="Brown A.J."/>
            <person name="Brown J.Y."/>
            <person name="Burford D.C."/>
            <person name="Burrill W."/>
            <person name="Burton J."/>
            <person name="Cahill P."/>
            <person name="Camire D."/>
            <person name="Carter N.P."/>
            <person name="Chapman J.C."/>
            <person name="Clark S.Y."/>
            <person name="Clarke G."/>
            <person name="Clee C.M."/>
            <person name="Clegg S."/>
            <person name="Corby N."/>
            <person name="Coulson A."/>
            <person name="Dhami P."/>
            <person name="Dutta I."/>
            <person name="Dunn M."/>
            <person name="Faulkner L."/>
            <person name="Frankish A."/>
            <person name="Frankland J.A."/>
            <person name="Garner P."/>
            <person name="Garnett J."/>
            <person name="Gribble S."/>
            <person name="Griffiths C."/>
            <person name="Grocock R."/>
            <person name="Gustafson E."/>
            <person name="Hammond S."/>
            <person name="Harley J.L."/>
            <person name="Hart E."/>
            <person name="Heath P.D."/>
            <person name="Ho T.P."/>
            <person name="Hopkins B."/>
            <person name="Horne J."/>
            <person name="Howden P.J."/>
            <person name="Huckle E."/>
            <person name="Hynds C."/>
            <person name="Johnson C."/>
            <person name="Johnson D."/>
            <person name="Kana A."/>
            <person name="Kay M."/>
            <person name="Kimberley A.M."/>
            <person name="Kershaw J.K."/>
            <person name="Kokkinaki M."/>
            <person name="Laird G.K."/>
            <person name="Lawlor S."/>
            <person name="Lee H.M."/>
            <person name="Leongamornlert D.A."/>
            <person name="Laird G."/>
            <person name="Lloyd C."/>
            <person name="Lloyd D.M."/>
            <person name="Loveland J."/>
            <person name="Lovell J."/>
            <person name="McLaren S."/>
            <person name="McLay K.E."/>
            <person name="McMurray A."/>
            <person name="Mashreghi-Mohammadi M."/>
            <person name="Matthews L."/>
            <person name="Milne S."/>
            <person name="Nickerson T."/>
            <person name="Nguyen M."/>
            <person name="Overton-Larty E."/>
            <person name="Palmer S.A."/>
            <person name="Pearce A.V."/>
            <person name="Peck A.I."/>
            <person name="Pelan S."/>
            <person name="Phillimore B."/>
            <person name="Porter K."/>
            <person name="Rice C.M."/>
            <person name="Rogosin A."/>
            <person name="Ross M.T."/>
            <person name="Sarafidou T."/>
            <person name="Sehra H.K."/>
            <person name="Shownkeen R."/>
            <person name="Skuce C.D."/>
            <person name="Smith M."/>
            <person name="Standring L."/>
            <person name="Sycamore N."/>
            <person name="Tester J."/>
            <person name="Thorpe A."/>
            <person name="Torcasso W."/>
            <person name="Tracey A."/>
            <person name="Tromans A."/>
            <person name="Tsolas J."/>
            <person name="Wall M."/>
            <person name="Walsh J."/>
            <person name="Wang H."/>
            <person name="Weinstock K."/>
            <person name="West A.P."/>
            <person name="Willey D.L."/>
            <person name="Whitehead S.L."/>
            <person name="Wilming L."/>
            <person name="Wray P.W."/>
            <person name="Young L."/>
            <person name="Chen Y."/>
            <person name="Lovering R.C."/>
            <person name="Moschonas N.K."/>
            <person name="Siebert R."/>
            <person name="Fechtel K."/>
            <person name="Bentley D."/>
            <person name="Durbin R.M."/>
            <person name="Hubbard T."/>
            <person name="Doucette-Stamm L."/>
            <person name="Beck S."/>
            <person name="Smith D.R."/>
            <person name="Rogers J."/>
        </authorList>
    </citation>
    <scope>NUCLEOTIDE SEQUENCE [LARGE SCALE GENOMIC DNA]</scope>
</reference>
<reference key="4">
    <citation type="journal article" date="2004" name="Genome Res.">
        <title>The status, quality, and expansion of the NIH full-length cDNA project: the Mammalian Gene Collection (MGC).</title>
        <authorList>
            <consortium name="The MGC Project Team"/>
        </authorList>
    </citation>
    <scope>NUCLEOTIDE SEQUENCE [LARGE SCALE MRNA] (ISOFORM 1)</scope>
    <scope>VARIANT GLN-626</scope>
    <source>
        <tissue>Testis</tissue>
    </source>
</reference>
<reference key="5">
    <citation type="journal article" date="2006" name="Clin. Cancer Res.">
        <title>A novel cancer testis antigen that is frequently expressed in pancreatic, lung, and endometrial cancers.</title>
        <authorList>
            <person name="Okada T."/>
            <person name="Akada M."/>
            <person name="Fujita T."/>
            <person name="Iwata T."/>
            <person name="Goto Y."/>
            <person name="Kido K."/>
            <person name="Okada T."/>
            <person name="Matsuzaki Y."/>
            <person name="Kobayashi K."/>
            <person name="Matsuno S."/>
            <person name="Sunamura M."/>
            <person name="Kawakami Y."/>
        </authorList>
    </citation>
    <scope>NUCLEOTIDE SEQUENCE [MRNA] (ISOFORM 5)</scope>
    <scope>TISSUE SPECIFICITY</scope>
    <scope>IDENTIFICATION AS A CANCER/TESTIS ANTIGEN</scope>
    <source>
        <tissue>Testis</tissue>
    </source>
</reference>
<reference key="6">
    <citation type="journal article" date="2021" name="Dev. Cell">
        <title>Autophagic elimination of ribosomes during spermiogenesis provides energy for flagellar motility.</title>
        <authorList>
            <person name="Lei Y."/>
            <person name="Zhang X."/>
            <person name="Xu Q."/>
            <person name="Liu S."/>
            <person name="Li C."/>
            <person name="Jiang H."/>
            <person name="Lin H."/>
            <person name="Kong E."/>
            <person name="Liu J."/>
            <person name="Qi S."/>
            <person name="Li H."/>
            <person name="Xu W."/>
            <person name="Lu K."/>
        </authorList>
    </citation>
    <scope>VARIANT ALA-484</scope>
    <scope>CHARACTERIZATION OF VARIANT ALA-484</scope>
    <scope>FUNCTION</scope>
    <scope>SUBUNIT</scope>
</reference>